<proteinExistence type="evidence at protein level"/>
<accession>P33036</accession>
<dbReference type="EC" id="3.5.5.1"/>
<dbReference type="GO" id="GO:0000257">
    <property type="term" value="F:nitrilase activity"/>
    <property type="evidence" value="ECO:0007669"/>
    <property type="project" value="UniProtKB-EC"/>
</dbReference>
<protein>
    <recommendedName>
        <fullName>Nitrilase</fullName>
        <ecNumber>3.5.5.1</ecNumber>
    </recommendedName>
</protein>
<evidence type="ECO:0000255" key="1">
    <source>
        <dbReference type="PROSITE-ProRule" id="PRU10105"/>
    </source>
</evidence>
<evidence type="ECO:0000305" key="2"/>
<keyword id="KW-0903">Direct protein sequencing</keyword>
<keyword id="KW-0378">Hydrolase</keyword>
<organism>
    <name type="scientific">Acinetobacter sp. (strain AK226)</name>
    <dbReference type="NCBI Taxonomy" id="72569"/>
    <lineage>
        <taxon>Bacteria</taxon>
        <taxon>Pseudomonadati</taxon>
        <taxon>Pseudomonadota</taxon>
        <taxon>Gammaproteobacteria</taxon>
        <taxon>Moraxellales</taxon>
        <taxon>Moraxellaceae</taxon>
        <taxon>Acinetobacter</taxon>
    </lineage>
</organism>
<comment type="function">
    <text>Acts on many kinds of nitrile compounds such as aliphatic, aromatic, and heterocyclic mononitriles or dinitriles. Prefers S-(-)-2-(4'-isobutylphenyl)-propionitrile to R-(+)-2-(4'-isobutylphenyl)-propionitrile as the substrate.</text>
</comment>
<comment type="catalytic activity">
    <reaction evidence="1">
        <text>a nitrile + 2 H2O = a carboxylate + NH4(+)</text>
        <dbReference type="Rhea" id="RHEA:21724"/>
        <dbReference type="ChEBI" id="CHEBI:15377"/>
        <dbReference type="ChEBI" id="CHEBI:18379"/>
        <dbReference type="ChEBI" id="CHEBI:28938"/>
        <dbReference type="ChEBI" id="CHEBI:29067"/>
        <dbReference type="EC" id="3.5.5.1"/>
    </reaction>
</comment>
<comment type="similarity">
    <text evidence="2">Belongs to the carbon-nitrogen hydrolase superfamily. Nitrilase family.</text>
</comment>
<name>NRLA_ACISA</name>
<sequence length="21" mass="2223">VSYNSKFLAATVQAEPVVLDA</sequence>
<feature type="chain" id="PRO_0000204041" description="Nitrilase">
    <location>
        <begin position="1"/>
        <end position="21" status="greater than"/>
    </location>
</feature>
<feature type="non-terminal residue">
    <location>
        <position position="21"/>
    </location>
</feature>
<reference key="1">
    <citation type="journal article" date="1991" name="Agric. Biol. Chem.">
        <title>Purification and characterization of nitrilase responsible for the enantioselective hydrolysis from Acinetobacter sp. AK 226.</title>
        <authorList>
            <person name="Yamamoto K."/>
            <person name="Komatsu K."/>
        </authorList>
    </citation>
    <scope>PROTEIN SEQUENCE</scope>
</reference>